<comment type="function">
    <text evidence="3">Inhibits fibrinogen interaction with platelets. Acts by binding to alpha-IIb/beta-3 (ITGA2B/ITGB3) on the platelet surface and inhibits aggregation induced by ADP, thrombin, platelet-activating factor and collagen.</text>
</comment>
<comment type="subunit">
    <text evidence="3">Monomer.</text>
</comment>
<comment type="subcellular location">
    <subcellularLocation>
        <location evidence="3">Secreted</location>
    </subcellularLocation>
</comment>
<comment type="tissue specificity">
    <text evidence="6">Expressed by the venom gland.</text>
</comment>
<comment type="miscellaneous">
    <text>The disintegrins belong to the medium disintegrin subfamily.</text>
</comment>
<comment type="similarity">
    <text evidence="5">Belongs to the venom metalloproteinase (M12B) family. P-II subfamily. P-IIa sub-subfamily.</text>
</comment>
<reference key="1">
    <citation type="journal article" date="1991" name="Biochem. Pharmacol.">
        <title>Halysin, an antiplatelet Arg-Gly-Asp-containing snake venom peptide, as fibrinogen receptor antagonist.</title>
        <authorList>
            <person name="Huang T.-F."/>
            <person name="Liu C.-S."/>
            <person name="Ouyang C.H."/>
            <person name="Teng C.-M."/>
        </authorList>
    </citation>
    <scope>PROTEIN SEQUENCE</scope>
    <scope>FUNCTION</scope>
    <scope>SUBUNIT</scope>
    <scope>SUBCELLULAR LOCATION</scope>
    <source>
        <tissue>Venom</tissue>
    </source>
</reference>
<proteinExistence type="evidence at protein level"/>
<evidence type="ECO:0000250" key="1">
    <source>
        <dbReference type="UniProtKB" id="Q0NZX5"/>
    </source>
</evidence>
<evidence type="ECO:0000255" key="2">
    <source>
        <dbReference type="PROSITE-ProRule" id="PRU00068"/>
    </source>
</evidence>
<evidence type="ECO:0000269" key="3">
    <source>
    </source>
</evidence>
<evidence type="ECO:0000303" key="4">
    <source>
    </source>
</evidence>
<evidence type="ECO:0000305" key="5"/>
<evidence type="ECO:0000305" key="6">
    <source>
    </source>
</evidence>
<feature type="chain" id="PRO_0000101782" description="Disintegrin halysin" evidence="3">
    <location>
        <begin position="1"/>
        <end position="71"/>
    </location>
</feature>
<feature type="domain" description="Disintegrin" evidence="2">
    <location>
        <begin position="1"/>
        <end position="71"/>
    </location>
</feature>
<feature type="short sequence motif" description="Cell attachment site">
    <location>
        <begin position="51"/>
        <end position="53"/>
    </location>
</feature>
<feature type="disulfide bond" evidence="1">
    <location>
        <begin position="6"/>
        <end position="21"/>
    </location>
</feature>
<feature type="disulfide bond" evidence="1">
    <location>
        <begin position="8"/>
        <end position="16"/>
    </location>
</feature>
<feature type="disulfide bond" evidence="1">
    <location>
        <begin position="15"/>
        <end position="38"/>
    </location>
</feature>
<feature type="disulfide bond" evidence="1">
    <location>
        <begin position="29"/>
        <end position="35"/>
    </location>
</feature>
<feature type="disulfide bond" evidence="1">
    <location>
        <begin position="34"/>
        <end position="59"/>
    </location>
</feature>
<feature type="disulfide bond" evidence="1 2">
    <location>
        <begin position="47"/>
        <end position="66"/>
    </location>
</feature>
<keyword id="KW-1217">Cell adhesion impairing toxin</keyword>
<keyword id="KW-0903">Direct protein sequencing</keyword>
<keyword id="KW-1015">Disulfide bond</keyword>
<keyword id="KW-1199">Hemostasis impairing toxin</keyword>
<keyword id="KW-1201">Platelet aggregation inhibiting toxin</keyword>
<keyword id="KW-0964">Secreted</keyword>
<keyword id="KW-0800">Toxin</keyword>
<name>VM2_GLOBL</name>
<dbReference type="SMR" id="P21858"/>
<dbReference type="GO" id="GO:0005576">
    <property type="term" value="C:extracellular region"/>
    <property type="evidence" value="ECO:0007669"/>
    <property type="project" value="UniProtKB-SubCell"/>
</dbReference>
<dbReference type="GO" id="GO:0090729">
    <property type="term" value="F:toxin activity"/>
    <property type="evidence" value="ECO:0007669"/>
    <property type="project" value="UniProtKB-KW"/>
</dbReference>
<dbReference type="FunFam" id="4.10.70.10:FF:000005">
    <property type="entry name" value="Zinc metalloproteinase/disintegrin"/>
    <property type="match status" value="1"/>
</dbReference>
<dbReference type="Gene3D" id="4.10.70.10">
    <property type="entry name" value="Disintegrin domain"/>
    <property type="match status" value="1"/>
</dbReference>
<dbReference type="InterPro" id="IPR018358">
    <property type="entry name" value="Disintegrin_CS"/>
</dbReference>
<dbReference type="InterPro" id="IPR001762">
    <property type="entry name" value="Disintegrin_dom"/>
</dbReference>
<dbReference type="InterPro" id="IPR036436">
    <property type="entry name" value="Disintegrin_dom_sf"/>
</dbReference>
<dbReference type="PANTHER" id="PTHR11905">
    <property type="entry name" value="ADAM A DISINTEGRIN AND METALLOPROTEASE DOMAIN"/>
    <property type="match status" value="1"/>
</dbReference>
<dbReference type="PANTHER" id="PTHR11905:SF159">
    <property type="entry name" value="ADAM METALLOPROTEASE"/>
    <property type="match status" value="1"/>
</dbReference>
<dbReference type="Pfam" id="PF00200">
    <property type="entry name" value="Disintegrin"/>
    <property type="match status" value="1"/>
</dbReference>
<dbReference type="PRINTS" id="PR00289">
    <property type="entry name" value="DISINTEGRIN"/>
</dbReference>
<dbReference type="SMART" id="SM00050">
    <property type="entry name" value="DISIN"/>
    <property type="match status" value="1"/>
</dbReference>
<dbReference type="SUPFAM" id="SSF57552">
    <property type="entry name" value="Blood coagulation inhibitor (disintegrin)"/>
    <property type="match status" value="1"/>
</dbReference>
<dbReference type="PROSITE" id="PS00427">
    <property type="entry name" value="DISINTEGRIN_1"/>
    <property type="match status" value="1"/>
</dbReference>
<dbReference type="PROSITE" id="PS50214">
    <property type="entry name" value="DISINTEGRIN_2"/>
    <property type="match status" value="1"/>
</dbReference>
<accession>P21858</accession>
<protein>
    <recommendedName>
        <fullName evidence="4">Disintegrin halysin</fullName>
    </recommendedName>
    <alternativeName>
        <fullName>Platelet aggregation activation inhibitor</fullName>
    </alternativeName>
</protein>
<organism>
    <name type="scientific">Gloydius blomhoffii</name>
    <name type="common">Mamushi</name>
    <name type="synonym">Agkistrodon halys blomhoffi</name>
    <dbReference type="NCBI Taxonomy" id="242054"/>
    <lineage>
        <taxon>Eukaryota</taxon>
        <taxon>Metazoa</taxon>
        <taxon>Chordata</taxon>
        <taxon>Craniata</taxon>
        <taxon>Vertebrata</taxon>
        <taxon>Euteleostomi</taxon>
        <taxon>Lepidosauria</taxon>
        <taxon>Squamata</taxon>
        <taxon>Bifurcata</taxon>
        <taxon>Unidentata</taxon>
        <taxon>Episquamata</taxon>
        <taxon>Toxicofera</taxon>
        <taxon>Serpentes</taxon>
        <taxon>Colubroidea</taxon>
        <taxon>Viperidae</taxon>
        <taxon>Crotalinae</taxon>
        <taxon>Gloydius</taxon>
    </lineage>
</organism>
<sequence>EAGEECDCGSPGNPCCDAATCKLRQGAQCAEGLCCDQCRFMKKGTVCRIARGDDMDDYCNGISAGCPRNPF</sequence>